<comment type="function">
    <text evidence="1">Catalyzes the conversion of glucosamine-6-phosphate to glucosamine-1-phosphate.</text>
</comment>
<comment type="catalytic activity">
    <reaction evidence="1">
        <text>alpha-D-glucosamine 1-phosphate = D-glucosamine 6-phosphate</text>
        <dbReference type="Rhea" id="RHEA:23424"/>
        <dbReference type="ChEBI" id="CHEBI:58516"/>
        <dbReference type="ChEBI" id="CHEBI:58725"/>
        <dbReference type="EC" id="5.4.2.10"/>
    </reaction>
</comment>
<comment type="cofactor">
    <cofactor evidence="1">
        <name>Mg(2+)</name>
        <dbReference type="ChEBI" id="CHEBI:18420"/>
    </cofactor>
    <text evidence="1">Binds 1 Mg(2+) ion per subunit.</text>
</comment>
<comment type="PTM">
    <text evidence="1">Activated by phosphorylation.</text>
</comment>
<comment type="similarity">
    <text evidence="1">Belongs to the phosphohexose mutase family.</text>
</comment>
<evidence type="ECO:0000255" key="1">
    <source>
        <dbReference type="HAMAP-Rule" id="MF_01554"/>
    </source>
</evidence>
<keyword id="KW-0413">Isomerase</keyword>
<keyword id="KW-0460">Magnesium</keyword>
<keyword id="KW-0479">Metal-binding</keyword>
<keyword id="KW-0597">Phosphoprotein</keyword>
<keyword id="KW-1185">Reference proteome</keyword>
<gene>
    <name evidence="1" type="primary">glmM</name>
    <name type="ordered locus">Mpe_A1270</name>
</gene>
<feature type="chain" id="PRO_0000301337" description="Phosphoglucosamine mutase">
    <location>
        <begin position="1"/>
        <end position="457"/>
    </location>
</feature>
<feature type="active site" description="Phosphoserine intermediate" evidence="1">
    <location>
        <position position="106"/>
    </location>
</feature>
<feature type="binding site" description="via phosphate group" evidence="1">
    <location>
        <position position="106"/>
    </location>
    <ligand>
        <name>Mg(2+)</name>
        <dbReference type="ChEBI" id="CHEBI:18420"/>
    </ligand>
</feature>
<feature type="binding site" evidence="1">
    <location>
        <position position="245"/>
    </location>
    <ligand>
        <name>Mg(2+)</name>
        <dbReference type="ChEBI" id="CHEBI:18420"/>
    </ligand>
</feature>
<feature type="binding site" evidence="1">
    <location>
        <position position="247"/>
    </location>
    <ligand>
        <name>Mg(2+)</name>
        <dbReference type="ChEBI" id="CHEBI:18420"/>
    </ligand>
</feature>
<feature type="binding site" evidence="1">
    <location>
        <position position="249"/>
    </location>
    <ligand>
        <name>Mg(2+)</name>
        <dbReference type="ChEBI" id="CHEBI:18420"/>
    </ligand>
</feature>
<feature type="modified residue" description="Phosphoserine" evidence="1">
    <location>
        <position position="106"/>
    </location>
</feature>
<reference key="1">
    <citation type="journal article" date="2007" name="J. Bacteriol.">
        <title>Whole-genome analysis of the methyl tert-butyl ether-degrading beta-proteobacterium Methylibium petroleiphilum PM1.</title>
        <authorList>
            <person name="Kane S.R."/>
            <person name="Chakicherla A.Y."/>
            <person name="Chain P.S.G."/>
            <person name="Schmidt R."/>
            <person name="Shin M.W."/>
            <person name="Legler T.C."/>
            <person name="Scow K.M."/>
            <person name="Larimer F.W."/>
            <person name="Lucas S.M."/>
            <person name="Richardson P.M."/>
            <person name="Hristova K.R."/>
        </authorList>
    </citation>
    <scope>NUCLEOTIDE SEQUENCE [LARGE SCALE GENOMIC DNA]</scope>
    <source>
        <strain>ATCC BAA-1232 / LMG 22953 / PM1</strain>
    </source>
</reference>
<dbReference type="EC" id="5.4.2.10" evidence="1"/>
<dbReference type="EMBL" id="CP000555">
    <property type="protein sequence ID" value="ABM94232.1"/>
    <property type="molecule type" value="Genomic_DNA"/>
</dbReference>
<dbReference type="RefSeq" id="WP_011828869.1">
    <property type="nucleotide sequence ID" value="NC_008825.1"/>
</dbReference>
<dbReference type="SMR" id="A2SF93"/>
<dbReference type="STRING" id="420662.Mpe_A1270"/>
<dbReference type="KEGG" id="mpt:Mpe_A1270"/>
<dbReference type="eggNOG" id="COG1109">
    <property type="taxonomic scope" value="Bacteria"/>
</dbReference>
<dbReference type="HOGENOM" id="CLU_016950_7_0_4"/>
<dbReference type="Proteomes" id="UP000000366">
    <property type="component" value="Chromosome"/>
</dbReference>
<dbReference type="GO" id="GO:0005829">
    <property type="term" value="C:cytosol"/>
    <property type="evidence" value="ECO:0007669"/>
    <property type="project" value="TreeGrafter"/>
</dbReference>
<dbReference type="GO" id="GO:0000287">
    <property type="term" value="F:magnesium ion binding"/>
    <property type="evidence" value="ECO:0007669"/>
    <property type="project" value="UniProtKB-UniRule"/>
</dbReference>
<dbReference type="GO" id="GO:0008966">
    <property type="term" value="F:phosphoglucosamine mutase activity"/>
    <property type="evidence" value="ECO:0007669"/>
    <property type="project" value="UniProtKB-UniRule"/>
</dbReference>
<dbReference type="GO" id="GO:0004615">
    <property type="term" value="F:phosphomannomutase activity"/>
    <property type="evidence" value="ECO:0007669"/>
    <property type="project" value="TreeGrafter"/>
</dbReference>
<dbReference type="GO" id="GO:0005975">
    <property type="term" value="P:carbohydrate metabolic process"/>
    <property type="evidence" value="ECO:0007669"/>
    <property type="project" value="InterPro"/>
</dbReference>
<dbReference type="GO" id="GO:0009252">
    <property type="term" value="P:peptidoglycan biosynthetic process"/>
    <property type="evidence" value="ECO:0007669"/>
    <property type="project" value="TreeGrafter"/>
</dbReference>
<dbReference type="GO" id="GO:0006048">
    <property type="term" value="P:UDP-N-acetylglucosamine biosynthetic process"/>
    <property type="evidence" value="ECO:0007669"/>
    <property type="project" value="TreeGrafter"/>
</dbReference>
<dbReference type="CDD" id="cd05802">
    <property type="entry name" value="GlmM"/>
    <property type="match status" value="1"/>
</dbReference>
<dbReference type="FunFam" id="3.30.310.50:FF:000001">
    <property type="entry name" value="Phosphoglucosamine mutase"/>
    <property type="match status" value="1"/>
</dbReference>
<dbReference type="FunFam" id="3.40.120.10:FF:000001">
    <property type="entry name" value="Phosphoglucosamine mutase"/>
    <property type="match status" value="1"/>
</dbReference>
<dbReference type="FunFam" id="3.40.120.10:FF:000003">
    <property type="entry name" value="Phosphoglucosamine mutase"/>
    <property type="match status" value="1"/>
</dbReference>
<dbReference type="Gene3D" id="3.40.120.10">
    <property type="entry name" value="Alpha-D-Glucose-1,6-Bisphosphate, subunit A, domain 3"/>
    <property type="match status" value="3"/>
</dbReference>
<dbReference type="Gene3D" id="3.30.310.50">
    <property type="entry name" value="Alpha-D-phosphohexomutase, C-terminal domain"/>
    <property type="match status" value="1"/>
</dbReference>
<dbReference type="HAMAP" id="MF_01554_B">
    <property type="entry name" value="GlmM_B"/>
    <property type="match status" value="1"/>
</dbReference>
<dbReference type="InterPro" id="IPR005844">
    <property type="entry name" value="A-D-PHexomutase_a/b/a-I"/>
</dbReference>
<dbReference type="InterPro" id="IPR016055">
    <property type="entry name" value="A-D-PHexomutase_a/b/a-I/II/III"/>
</dbReference>
<dbReference type="InterPro" id="IPR005845">
    <property type="entry name" value="A-D-PHexomutase_a/b/a-II"/>
</dbReference>
<dbReference type="InterPro" id="IPR005846">
    <property type="entry name" value="A-D-PHexomutase_a/b/a-III"/>
</dbReference>
<dbReference type="InterPro" id="IPR005843">
    <property type="entry name" value="A-D-PHexomutase_C"/>
</dbReference>
<dbReference type="InterPro" id="IPR036900">
    <property type="entry name" value="A-D-PHexomutase_C_sf"/>
</dbReference>
<dbReference type="InterPro" id="IPR016066">
    <property type="entry name" value="A-D-PHexomutase_CS"/>
</dbReference>
<dbReference type="InterPro" id="IPR005841">
    <property type="entry name" value="Alpha-D-phosphohexomutase_SF"/>
</dbReference>
<dbReference type="InterPro" id="IPR006352">
    <property type="entry name" value="GlmM_bact"/>
</dbReference>
<dbReference type="InterPro" id="IPR050060">
    <property type="entry name" value="Phosphoglucosamine_mutase"/>
</dbReference>
<dbReference type="NCBIfam" id="TIGR01455">
    <property type="entry name" value="glmM"/>
    <property type="match status" value="1"/>
</dbReference>
<dbReference type="NCBIfam" id="NF008139">
    <property type="entry name" value="PRK10887.1"/>
    <property type="match status" value="1"/>
</dbReference>
<dbReference type="PANTHER" id="PTHR42946:SF1">
    <property type="entry name" value="PHOSPHOGLUCOMUTASE (ALPHA-D-GLUCOSE-1,6-BISPHOSPHATE-DEPENDENT)"/>
    <property type="match status" value="1"/>
</dbReference>
<dbReference type="PANTHER" id="PTHR42946">
    <property type="entry name" value="PHOSPHOHEXOSE MUTASE"/>
    <property type="match status" value="1"/>
</dbReference>
<dbReference type="Pfam" id="PF02878">
    <property type="entry name" value="PGM_PMM_I"/>
    <property type="match status" value="1"/>
</dbReference>
<dbReference type="Pfam" id="PF02879">
    <property type="entry name" value="PGM_PMM_II"/>
    <property type="match status" value="1"/>
</dbReference>
<dbReference type="Pfam" id="PF02880">
    <property type="entry name" value="PGM_PMM_III"/>
    <property type="match status" value="1"/>
</dbReference>
<dbReference type="Pfam" id="PF00408">
    <property type="entry name" value="PGM_PMM_IV"/>
    <property type="match status" value="1"/>
</dbReference>
<dbReference type="PRINTS" id="PR00509">
    <property type="entry name" value="PGMPMM"/>
</dbReference>
<dbReference type="SUPFAM" id="SSF55957">
    <property type="entry name" value="Phosphoglucomutase, C-terminal domain"/>
    <property type="match status" value="1"/>
</dbReference>
<dbReference type="SUPFAM" id="SSF53738">
    <property type="entry name" value="Phosphoglucomutase, first 3 domains"/>
    <property type="match status" value="3"/>
</dbReference>
<dbReference type="PROSITE" id="PS00710">
    <property type="entry name" value="PGM_PMM"/>
    <property type="match status" value="1"/>
</dbReference>
<sequence>MSRTYFGTDGIRGAVGQAPITPDFVLRLGHAVGRVLKSQQTSPASRPTVLIGKDTRISGYMLESALEAGFASAGVDVLLTGPLPTPGVAYLTRALRLSLGVVISASHNPYGDNGIKFFSAKGEKLPDSWEQQVEATVEEAAQWVDSSGLGKARRLDDAQGRYIEFCKSTVAGELSLKGLKLVVDGAHGAAYQVAPAVFHELGAEVISIGCNPNGLNINDGFGATHPEALVSAVQAHQADYGIALDGDADRLQLVDATGRLYNGDELLYLMTLDRLAAEPSEDAAPSRVGVPGVVGTLMTNLAVEQALAARGVAFVRAKVGDRYVLEELLARGWQLGGEGSGHLIALDKHTTGDGLVSALQVLQAVVRSGRTLAQLLEGLTLFPQVLLNVRLQPGQDWKASAALAEAQRESLAELGERGRILIRPSGTEPLLRVMVEASDAALAQRCAQRMADAVRRA</sequence>
<proteinExistence type="inferred from homology"/>
<protein>
    <recommendedName>
        <fullName evidence="1">Phosphoglucosamine mutase</fullName>
        <ecNumber evidence="1">5.4.2.10</ecNumber>
    </recommendedName>
</protein>
<name>GLMM_METPP</name>
<accession>A2SF93</accession>
<organism>
    <name type="scientific">Methylibium petroleiphilum (strain ATCC BAA-1232 / LMG 22953 / PM1)</name>
    <dbReference type="NCBI Taxonomy" id="420662"/>
    <lineage>
        <taxon>Bacteria</taxon>
        <taxon>Pseudomonadati</taxon>
        <taxon>Pseudomonadota</taxon>
        <taxon>Betaproteobacteria</taxon>
        <taxon>Burkholderiales</taxon>
        <taxon>Sphaerotilaceae</taxon>
        <taxon>Methylibium</taxon>
    </lineage>
</organism>